<name>PDXJ_DESOH</name>
<comment type="function">
    <text evidence="1">Catalyzes the complicated ring closure reaction between the two acyclic compounds 1-deoxy-D-xylulose-5-phosphate (DXP) and 3-amino-2-oxopropyl phosphate (1-amino-acetone-3-phosphate or AAP) to form pyridoxine 5'-phosphate (PNP) and inorganic phosphate.</text>
</comment>
<comment type="catalytic activity">
    <reaction evidence="1">
        <text>3-amino-2-oxopropyl phosphate + 1-deoxy-D-xylulose 5-phosphate = pyridoxine 5'-phosphate + phosphate + 2 H2O + H(+)</text>
        <dbReference type="Rhea" id="RHEA:15265"/>
        <dbReference type="ChEBI" id="CHEBI:15377"/>
        <dbReference type="ChEBI" id="CHEBI:15378"/>
        <dbReference type="ChEBI" id="CHEBI:43474"/>
        <dbReference type="ChEBI" id="CHEBI:57279"/>
        <dbReference type="ChEBI" id="CHEBI:57792"/>
        <dbReference type="ChEBI" id="CHEBI:58589"/>
        <dbReference type="EC" id="2.6.99.2"/>
    </reaction>
</comment>
<comment type="pathway">
    <text evidence="1">Cofactor biosynthesis; pyridoxine 5'-phosphate biosynthesis; pyridoxine 5'-phosphate from D-erythrose 4-phosphate: step 5/5.</text>
</comment>
<comment type="subunit">
    <text evidence="1">Homooctamer; tetramer of dimers.</text>
</comment>
<comment type="subcellular location">
    <subcellularLocation>
        <location evidence="1">Cytoplasm</location>
    </subcellularLocation>
</comment>
<comment type="similarity">
    <text evidence="1">Belongs to the PNP synthase family.</text>
</comment>
<gene>
    <name evidence="1" type="primary">pdxJ</name>
    <name type="ordered locus">Dole_0776</name>
</gene>
<reference key="1">
    <citation type="submission" date="2007-10" db="EMBL/GenBank/DDBJ databases">
        <title>Complete sequence of Desulfococcus oleovorans Hxd3.</title>
        <authorList>
            <consortium name="US DOE Joint Genome Institute"/>
            <person name="Copeland A."/>
            <person name="Lucas S."/>
            <person name="Lapidus A."/>
            <person name="Barry K."/>
            <person name="Glavina del Rio T."/>
            <person name="Dalin E."/>
            <person name="Tice H."/>
            <person name="Pitluck S."/>
            <person name="Kiss H."/>
            <person name="Brettin T."/>
            <person name="Bruce D."/>
            <person name="Detter J.C."/>
            <person name="Han C."/>
            <person name="Schmutz J."/>
            <person name="Larimer F."/>
            <person name="Land M."/>
            <person name="Hauser L."/>
            <person name="Kyrpides N."/>
            <person name="Kim E."/>
            <person name="Wawrik B."/>
            <person name="Richardson P."/>
        </authorList>
    </citation>
    <scope>NUCLEOTIDE SEQUENCE [LARGE SCALE GENOMIC DNA]</scope>
    <source>
        <strain>DSM 6200 / JCM 39069 / Hxd3</strain>
    </source>
</reference>
<keyword id="KW-0963">Cytoplasm</keyword>
<keyword id="KW-0664">Pyridoxine biosynthesis</keyword>
<keyword id="KW-1185">Reference proteome</keyword>
<keyword id="KW-0808">Transferase</keyword>
<proteinExistence type="inferred from homology"/>
<protein>
    <recommendedName>
        <fullName evidence="1">Pyridoxine 5'-phosphate synthase</fullName>
        <shortName evidence="1">PNP synthase</shortName>
        <ecNumber evidence="1">2.6.99.2</ecNumber>
    </recommendedName>
</protein>
<dbReference type="EC" id="2.6.99.2" evidence="1"/>
<dbReference type="EMBL" id="CP000859">
    <property type="protein sequence ID" value="ABW66586.1"/>
    <property type="molecule type" value="Genomic_DNA"/>
</dbReference>
<dbReference type="RefSeq" id="WP_012174204.1">
    <property type="nucleotide sequence ID" value="NC_009943.1"/>
</dbReference>
<dbReference type="SMR" id="A8ZVC5"/>
<dbReference type="STRING" id="96561.Dole_0776"/>
<dbReference type="KEGG" id="dol:Dole_0776"/>
<dbReference type="eggNOG" id="COG0854">
    <property type="taxonomic scope" value="Bacteria"/>
</dbReference>
<dbReference type="HOGENOM" id="CLU_074563_0_0_7"/>
<dbReference type="OrthoDB" id="9806590at2"/>
<dbReference type="UniPathway" id="UPA00244">
    <property type="reaction ID" value="UER00313"/>
</dbReference>
<dbReference type="Proteomes" id="UP000008561">
    <property type="component" value="Chromosome"/>
</dbReference>
<dbReference type="GO" id="GO:0005829">
    <property type="term" value="C:cytosol"/>
    <property type="evidence" value="ECO:0007669"/>
    <property type="project" value="TreeGrafter"/>
</dbReference>
<dbReference type="GO" id="GO:0033856">
    <property type="term" value="F:pyridoxine 5'-phosphate synthase activity"/>
    <property type="evidence" value="ECO:0007669"/>
    <property type="project" value="UniProtKB-EC"/>
</dbReference>
<dbReference type="GO" id="GO:0008615">
    <property type="term" value="P:pyridoxine biosynthetic process"/>
    <property type="evidence" value="ECO:0007669"/>
    <property type="project" value="UniProtKB-UniRule"/>
</dbReference>
<dbReference type="CDD" id="cd00003">
    <property type="entry name" value="PNPsynthase"/>
    <property type="match status" value="1"/>
</dbReference>
<dbReference type="Gene3D" id="3.20.20.70">
    <property type="entry name" value="Aldolase class I"/>
    <property type="match status" value="1"/>
</dbReference>
<dbReference type="HAMAP" id="MF_00279">
    <property type="entry name" value="PdxJ"/>
    <property type="match status" value="1"/>
</dbReference>
<dbReference type="InterPro" id="IPR013785">
    <property type="entry name" value="Aldolase_TIM"/>
</dbReference>
<dbReference type="InterPro" id="IPR004569">
    <property type="entry name" value="PyrdxlP_synth_PdxJ"/>
</dbReference>
<dbReference type="InterPro" id="IPR036130">
    <property type="entry name" value="Pyridoxine-5'_phos_synth"/>
</dbReference>
<dbReference type="NCBIfam" id="TIGR00559">
    <property type="entry name" value="pdxJ"/>
    <property type="match status" value="1"/>
</dbReference>
<dbReference type="NCBIfam" id="NF003625">
    <property type="entry name" value="PRK05265.1-3"/>
    <property type="match status" value="1"/>
</dbReference>
<dbReference type="NCBIfam" id="NF003627">
    <property type="entry name" value="PRK05265.1-5"/>
    <property type="match status" value="1"/>
</dbReference>
<dbReference type="PANTHER" id="PTHR30456">
    <property type="entry name" value="PYRIDOXINE 5'-PHOSPHATE SYNTHASE"/>
    <property type="match status" value="1"/>
</dbReference>
<dbReference type="PANTHER" id="PTHR30456:SF0">
    <property type="entry name" value="PYRIDOXINE 5'-PHOSPHATE SYNTHASE"/>
    <property type="match status" value="1"/>
</dbReference>
<dbReference type="Pfam" id="PF03740">
    <property type="entry name" value="PdxJ"/>
    <property type="match status" value="1"/>
</dbReference>
<dbReference type="SUPFAM" id="SSF63892">
    <property type="entry name" value="Pyridoxine 5'-phosphate synthase"/>
    <property type="match status" value="1"/>
</dbReference>
<sequence>MTHLAVNVDHIATLRQARGVDYPDPVAGAVLAQLAGAHGIVAHLREDRRHIQDTDVVRLRAAARRFILEMAVTPEMEKIALSVKPDLVTLVPEKRKELTTEGGLNLARHGGPVAKTIETLHRNEIPVSLFIDPDPGQVRRSHDAGAMAVEIHTGAFCEAATEKIRQKEFDRIRKAVEVARNLGLIVNAGHGLCYTTIEWMVTLKEIDEFSIGHSIVSRAALVGMDRAVRDMLALIS</sequence>
<organism>
    <name type="scientific">Desulfosudis oleivorans (strain DSM 6200 / JCM 39069 / Hxd3)</name>
    <name type="common">Desulfococcus oleovorans</name>
    <dbReference type="NCBI Taxonomy" id="96561"/>
    <lineage>
        <taxon>Bacteria</taxon>
        <taxon>Pseudomonadati</taxon>
        <taxon>Thermodesulfobacteriota</taxon>
        <taxon>Desulfobacteria</taxon>
        <taxon>Desulfobacterales</taxon>
        <taxon>Desulfosudaceae</taxon>
        <taxon>Desulfosudis</taxon>
    </lineage>
</organism>
<feature type="chain" id="PRO_1000114807" description="Pyridoxine 5'-phosphate synthase">
    <location>
        <begin position="1"/>
        <end position="236"/>
    </location>
</feature>
<feature type="active site" description="Proton acceptor" evidence="1">
    <location>
        <position position="43"/>
    </location>
</feature>
<feature type="active site" description="Proton acceptor" evidence="1">
    <location>
        <position position="69"/>
    </location>
</feature>
<feature type="active site" description="Proton donor" evidence="1">
    <location>
        <position position="190"/>
    </location>
</feature>
<feature type="binding site" evidence="1">
    <location>
        <position position="7"/>
    </location>
    <ligand>
        <name>3-amino-2-oxopropyl phosphate</name>
        <dbReference type="ChEBI" id="CHEBI:57279"/>
    </ligand>
</feature>
<feature type="binding site" evidence="1">
    <location>
        <begin position="9"/>
        <end position="10"/>
    </location>
    <ligand>
        <name>1-deoxy-D-xylulose 5-phosphate</name>
        <dbReference type="ChEBI" id="CHEBI:57792"/>
    </ligand>
</feature>
<feature type="binding site" evidence="1">
    <location>
        <position position="18"/>
    </location>
    <ligand>
        <name>3-amino-2-oxopropyl phosphate</name>
        <dbReference type="ChEBI" id="CHEBI:57279"/>
    </ligand>
</feature>
<feature type="binding site" evidence="1">
    <location>
        <position position="45"/>
    </location>
    <ligand>
        <name>1-deoxy-D-xylulose 5-phosphate</name>
        <dbReference type="ChEBI" id="CHEBI:57792"/>
    </ligand>
</feature>
<feature type="binding site" evidence="1">
    <location>
        <position position="50"/>
    </location>
    <ligand>
        <name>1-deoxy-D-xylulose 5-phosphate</name>
        <dbReference type="ChEBI" id="CHEBI:57792"/>
    </ligand>
</feature>
<feature type="binding site" evidence="1">
    <location>
        <position position="99"/>
    </location>
    <ligand>
        <name>1-deoxy-D-xylulose 5-phosphate</name>
        <dbReference type="ChEBI" id="CHEBI:57792"/>
    </ligand>
</feature>
<feature type="binding site" evidence="1">
    <location>
        <position position="191"/>
    </location>
    <ligand>
        <name>3-amino-2-oxopropyl phosphate</name>
        <dbReference type="ChEBI" id="CHEBI:57279"/>
    </ligand>
</feature>
<feature type="binding site" evidence="1">
    <location>
        <begin position="212"/>
        <end position="213"/>
    </location>
    <ligand>
        <name>3-amino-2-oxopropyl phosphate</name>
        <dbReference type="ChEBI" id="CHEBI:57279"/>
    </ligand>
</feature>
<feature type="site" description="Transition state stabilizer" evidence="1">
    <location>
        <position position="150"/>
    </location>
</feature>
<evidence type="ECO:0000255" key="1">
    <source>
        <dbReference type="HAMAP-Rule" id="MF_00279"/>
    </source>
</evidence>
<accession>A8ZVC5</accession>